<comment type="similarity">
    <text evidence="1">Belongs to the CinA family.</text>
</comment>
<organism>
    <name type="scientific">Shewanella baltica (strain OS155 / ATCC BAA-1091)</name>
    <dbReference type="NCBI Taxonomy" id="325240"/>
    <lineage>
        <taxon>Bacteria</taxon>
        <taxon>Pseudomonadati</taxon>
        <taxon>Pseudomonadota</taxon>
        <taxon>Gammaproteobacteria</taxon>
        <taxon>Alteromonadales</taxon>
        <taxon>Shewanellaceae</taxon>
        <taxon>Shewanella</taxon>
    </lineage>
</organism>
<accession>A3DA29</accession>
<keyword id="KW-1185">Reference proteome</keyword>
<evidence type="ECO:0000255" key="1">
    <source>
        <dbReference type="HAMAP-Rule" id="MF_00226"/>
    </source>
</evidence>
<sequence>MKLEMICTGEEVLAGQIVDTNAAWFASTMMEHGVEIQRRVTVGDRLEDLIAVFQERSLHADVILVNGGLGPTSDDMSALAMAKAKGEPLVENVEWRERLEEWFTRNNREMPLSNLKQAMLPASAVMVDNPVGTACGFRVKLNRAWLFFTPGVPFELKHMVTEQFVPFIRDEFNLDSKVALKKLLTIGQGESALADKLEPLELPEGITIGYRSSMPHIEIKIFARGEKAIAVLPRVAGHIKMVLGTAVVAEDKATLAEEIHYKLLNSGLTLSVAESCTGGMITSQLVDFSGSSSYLQHGLVTYSNESKVRVLGVNPSTLDDHGAVSIATVEEMAKGARQILDSDYALATSGIAGPDGGTDEKPVGTVAIALATRGGVYSQMIKLPRRSRDLVRSLSAAVAYDMLRRELLAEAVIVDYQSIGRFSK</sequence>
<protein>
    <recommendedName>
        <fullName evidence="1">CinA-like protein</fullName>
    </recommendedName>
</protein>
<feature type="chain" id="PRO_0000336523" description="CinA-like protein">
    <location>
        <begin position="1"/>
        <end position="424"/>
    </location>
</feature>
<proteinExistence type="inferred from homology"/>
<dbReference type="EMBL" id="CP000563">
    <property type="protein sequence ID" value="ABN63592.1"/>
    <property type="molecule type" value="Genomic_DNA"/>
</dbReference>
<dbReference type="RefSeq" id="WP_011848140.1">
    <property type="nucleotide sequence ID" value="NC_009052.1"/>
</dbReference>
<dbReference type="SMR" id="A3DA29"/>
<dbReference type="STRING" id="325240.Sbal_4127"/>
<dbReference type="KEGG" id="sbl:Sbal_4127"/>
<dbReference type="HOGENOM" id="CLU_030805_9_2_6"/>
<dbReference type="OrthoDB" id="9801454at2"/>
<dbReference type="Proteomes" id="UP000001557">
    <property type="component" value="Chromosome"/>
</dbReference>
<dbReference type="CDD" id="cd00885">
    <property type="entry name" value="cinA"/>
    <property type="match status" value="1"/>
</dbReference>
<dbReference type="Gene3D" id="3.30.70.2860">
    <property type="match status" value="1"/>
</dbReference>
<dbReference type="Gene3D" id="3.90.950.20">
    <property type="entry name" value="CinA-like"/>
    <property type="match status" value="1"/>
</dbReference>
<dbReference type="Gene3D" id="3.40.980.10">
    <property type="entry name" value="MoaB/Mog-like domain"/>
    <property type="match status" value="1"/>
</dbReference>
<dbReference type="HAMAP" id="MF_00226_B">
    <property type="entry name" value="CinA_B"/>
    <property type="match status" value="1"/>
</dbReference>
<dbReference type="InterPro" id="IPR050101">
    <property type="entry name" value="CinA"/>
</dbReference>
<dbReference type="InterPro" id="IPR036653">
    <property type="entry name" value="CinA-like_C"/>
</dbReference>
<dbReference type="InterPro" id="IPR008136">
    <property type="entry name" value="CinA_C"/>
</dbReference>
<dbReference type="InterPro" id="IPR008135">
    <property type="entry name" value="Competence-induced_CinA"/>
</dbReference>
<dbReference type="InterPro" id="IPR036425">
    <property type="entry name" value="MoaB/Mog-like_dom_sf"/>
</dbReference>
<dbReference type="InterPro" id="IPR001453">
    <property type="entry name" value="MoaB/Mog_dom"/>
</dbReference>
<dbReference type="NCBIfam" id="TIGR00200">
    <property type="entry name" value="cinA_nterm"/>
    <property type="match status" value="1"/>
</dbReference>
<dbReference type="NCBIfam" id="TIGR00199">
    <property type="entry name" value="PncC_domain"/>
    <property type="match status" value="1"/>
</dbReference>
<dbReference type="PANTHER" id="PTHR13939">
    <property type="entry name" value="NICOTINAMIDE-NUCLEOTIDE AMIDOHYDROLASE PNCC"/>
    <property type="match status" value="1"/>
</dbReference>
<dbReference type="PANTHER" id="PTHR13939:SF0">
    <property type="entry name" value="NMN AMIDOHYDROLASE-LIKE PROTEIN YFAY"/>
    <property type="match status" value="1"/>
</dbReference>
<dbReference type="Pfam" id="PF02464">
    <property type="entry name" value="CinA"/>
    <property type="match status" value="1"/>
</dbReference>
<dbReference type="Pfam" id="PF00994">
    <property type="entry name" value="MoCF_biosynth"/>
    <property type="match status" value="1"/>
</dbReference>
<dbReference type="PIRSF" id="PIRSF006728">
    <property type="entry name" value="CinA"/>
    <property type="match status" value="1"/>
</dbReference>
<dbReference type="SMART" id="SM00852">
    <property type="entry name" value="MoCF_biosynth"/>
    <property type="match status" value="1"/>
</dbReference>
<dbReference type="SUPFAM" id="SSF142433">
    <property type="entry name" value="CinA-like"/>
    <property type="match status" value="1"/>
</dbReference>
<dbReference type="SUPFAM" id="SSF53218">
    <property type="entry name" value="Molybdenum cofactor biosynthesis proteins"/>
    <property type="match status" value="1"/>
</dbReference>
<reference key="1">
    <citation type="submission" date="2007-02" db="EMBL/GenBank/DDBJ databases">
        <title>Complete sequence of chromosome of Shewanella baltica OS155.</title>
        <authorList>
            <consortium name="US DOE Joint Genome Institute"/>
            <person name="Copeland A."/>
            <person name="Lucas S."/>
            <person name="Lapidus A."/>
            <person name="Barry K."/>
            <person name="Detter J.C."/>
            <person name="Glavina del Rio T."/>
            <person name="Hammon N."/>
            <person name="Israni S."/>
            <person name="Dalin E."/>
            <person name="Tice H."/>
            <person name="Pitluck S."/>
            <person name="Sims D.R."/>
            <person name="Brettin T."/>
            <person name="Bruce D."/>
            <person name="Han C."/>
            <person name="Tapia R."/>
            <person name="Brainard J."/>
            <person name="Schmutz J."/>
            <person name="Larimer F."/>
            <person name="Land M."/>
            <person name="Hauser L."/>
            <person name="Kyrpides N."/>
            <person name="Mikhailova N."/>
            <person name="Brettar I."/>
            <person name="Klappenbach J."/>
            <person name="Konstantinidis K."/>
            <person name="Rodrigues J."/>
            <person name="Tiedje J."/>
            <person name="Richardson P."/>
        </authorList>
    </citation>
    <scope>NUCLEOTIDE SEQUENCE [LARGE SCALE GENOMIC DNA]</scope>
    <source>
        <strain>OS155 / ATCC BAA-1091</strain>
    </source>
</reference>
<gene>
    <name type="ordered locus">Sbal_4127</name>
</gene>
<name>CINAL_SHEB5</name>